<protein>
    <recommendedName>
        <fullName evidence="1">Large ribosomal subunit protein bL20</fullName>
    </recommendedName>
    <alternativeName>
        <fullName evidence="2">50S ribosomal protein L20</fullName>
    </alternativeName>
</protein>
<proteinExistence type="inferred from homology"/>
<comment type="function">
    <text evidence="1">Binds directly to 23S ribosomal RNA and is necessary for the in vitro assembly process of the 50S ribosomal subunit. It is not involved in the protein synthesizing functions of that subunit.</text>
</comment>
<comment type="similarity">
    <text evidence="1">Belongs to the bacterial ribosomal protein bL20 family.</text>
</comment>
<sequence length="118" mass="13869">MRVKRGNVARKRRKKILKLAKGFRGAGSKLFRTANQQVMKALRSAYRDRRRKKRDFRRLWITRINAATRAQGLRYHEFIDGLKKANIQLNRKMLARLAFLDPEAFTQVVEAARQSRAS</sequence>
<name>RL20_SYNJB</name>
<feature type="chain" id="PRO_0000243748" description="Large ribosomal subunit protein bL20">
    <location>
        <begin position="1"/>
        <end position="118"/>
    </location>
</feature>
<accession>Q2JI02</accession>
<evidence type="ECO:0000255" key="1">
    <source>
        <dbReference type="HAMAP-Rule" id="MF_00382"/>
    </source>
</evidence>
<evidence type="ECO:0000305" key="2"/>
<dbReference type="EMBL" id="CP000240">
    <property type="protein sequence ID" value="ABD03769.1"/>
    <property type="molecule type" value="Genomic_DNA"/>
</dbReference>
<dbReference type="RefSeq" id="WP_011434388.1">
    <property type="nucleotide sequence ID" value="NC_007776.1"/>
</dbReference>
<dbReference type="SMR" id="Q2JI02"/>
<dbReference type="STRING" id="321332.CYB_2849"/>
<dbReference type="KEGG" id="cyb:CYB_2849"/>
<dbReference type="eggNOG" id="COG0292">
    <property type="taxonomic scope" value="Bacteria"/>
</dbReference>
<dbReference type="HOGENOM" id="CLU_123265_0_1_3"/>
<dbReference type="OrthoDB" id="9808966at2"/>
<dbReference type="Proteomes" id="UP000001938">
    <property type="component" value="Chromosome"/>
</dbReference>
<dbReference type="GO" id="GO:1990904">
    <property type="term" value="C:ribonucleoprotein complex"/>
    <property type="evidence" value="ECO:0007669"/>
    <property type="project" value="UniProtKB-KW"/>
</dbReference>
<dbReference type="GO" id="GO:0005840">
    <property type="term" value="C:ribosome"/>
    <property type="evidence" value="ECO:0007669"/>
    <property type="project" value="UniProtKB-KW"/>
</dbReference>
<dbReference type="GO" id="GO:0019843">
    <property type="term" value="F:rRNA binding"/>
    <property type="evidence" value="ECO:0007669"/>
    <property type="project" value="UniProtKB-UniRule"/>
</dbReference>
<dbReference type="GO" id="GO:0003735">
    <property type="term" value="F:structural constituent of ribosome"/>
    <property type="evidence" value="ECO:0007669"/>
    <property type="project" value="InterPro"/>
</dbReference>
<dbReference type="GO" id="GO:0000027">
    <property type="term" value="P:ribosomal large subunit assembly"/>
    <property type="evidence" value="ECO:0007669"/>
    <property type="project" value="UniProtKB-UniRule"/>
</dbReference>
<dbReference type="GO" id="GO:0006412">
    <property type="term" value="P:translation"/>
    <property type="evidence" value="ECO:0007669"/>
    <property type="project" value="InterPro"/>
</dbReference>
<dbReference type="CDD" id="cd07026">
    <property type="entry name" value="Ribosomal_L20"/>
    <property type="match status" value="1"/>
</dbReference>
<dbReference type="FunFam" id="1.10.1900.20:FF:000001">
    <property type="entry name" value="50S ribosomal protein L20"/>
    <property type="match status" value="1"/>
</dbReference>
<dbReference type="Gene3D" id="6.10.160.10">
    <property type="match status" value="1"/>
</dbReference>
<dbReference type="Gene3D" id="1.10.1900.20">
    <property type="entry name" value="Ribosomal protein L20"/>
    <property type="match status" value="1"/>
</dbReference>
<dbReference type="HAMAP" id="MF_00382">
    <property type="entry name" value="Ribosomal_bL20"/>
    <property type="match status" value="1"/>
</dbReference>
<dbReference type="InterPro" id="IPR005813">
    <property type="entry name" value="Ribosomal_bL20"/>
</dbReference>
<dbReference type="InterPro" id="IPR049946">
    <property type="entry name" value="RIBOSOMAL_L20_CS"/>
</dbReference>
<dbReference type="InterPro" id="IPR035566">
    <property type="entry name" value="Ribosomal_protein_bL20_C"/>
</dbReference>
<dbReference type="NCBIfam" id="TIGR01032">
    <property type="entry name" value="rplT_bact"/>
    <property type="match status" value="1"/>
</dbReference>
<dbReference type="PANTHER" id="PTHR10986">
    <property type="entry name" value="39S RIBOSOMAL PROTEIN L20"/>
    <property type="match status" value="1"/>
</dbReference>
<dbReference type="Pfam" id="PF00453">
    <property type="entry name" value="Ribosomal_L20"/>
    <property type="match status" value="1"/>
</dbReference>
<dbReference type="PRINTS" id="PR00062">
    <property type="entry name" value="RIBOSOMALL20"/>
</dbReference>
<dbReference type="SUPFAM" id="SSF74731">
    <property type="entry name" value="Ribosomal protein L20"/>
    <property type="match status" value="1"/>
</dbReference>
<dbReference type="PROSITE" id="PS00937">
    <property type="entry name" value="RIBOSOMAL_L20"/>
    <property type="match status" value="1"/>
</dbReference>
<gene>
    <name evidence="1" type="primary">rplT</name>
    <name evidence="1" type="synonym">rpl20</name>
    <name type="ordered locus">CYB_2849</name>
</gene>
<keyword id="KW-1185">Reference proteome</keyword>
<keyword id="KW-0687">Ribonucleoprotein</keyword>
<keyword id="KW-0689">Ribosomal protein</keyword>
<keyword id="KW-0694">RNA-binding</keyword>
<keyword id="KW-0699">rRNA-binding</keyword>
<organism>
    <name type="scientific">Synechococcus sp. (strain JA-2-3B'a(2-13))</name>
    <name type="common">Cyanobacteria bacterium Yellowstone B-Prime</name>
    <dbReference type="NCBI Taxonomy" id="321332"/>
    <lineage>
        <taxon>Bacteria</taxon>
        <taxon>Bacillati</taxon>
        <taxon>Cyanobacteriota</taxon>
        <taxon>Cyanophyceae</taxon>
        <taxon>Synechococcales</taxon>
        <taxon>Synechococcaceae</taxon>
        <taxon>Synechococcus</taxon>
    </lineage>
</organism>
<reference key="1">
    <citation type="journal article" date="2007" name="ISME J.">
        <title>Population level functional diversity in a microbial community revealed by comparative genomic and metagenomic analyses.</title>
        <authorList>
            <person name="Bhaya D."/>
            <person name="Grossman A.R."/>
            <person name="Steunou A.-S."/>
            <person name="Khuri N."/>
            <person name="Cohan F.M."/>
            <person name="Hamamura N."/>
            <person name="Melendrez M.C."/>
            <person name="Bateson M.M."/>
            <person name="Ward D.M."/>
            <person name="Heidelberg J.F."/>
        </authorList>
    </citation>
    <scope>NUCLEOTIDE SEQUENCE [LARGE SCALE GENOMIC DNA]</scope>
    <source>
        <strain>JA-2-3B'a(2-13)</strain>
    </source>
</reference>